<evidence type="ECO:0000255" key="1">
    <source>
        <dbReference type="HAMAP-Rule" id="MF_00015"/>
    </source>
</evidence>
<proteinExistence type="inferred from homology"/>
<gene>
    <name evidence="1" type="primary">lexA</name>
    <name type="ordered locus">PLES_20551</name>
</gene>
<comment type="function">
    <text evidence="1">Represses a number of genes involved in the response to DNA damage (SOS response), including recA and lexA. In the presence of single-stranded DNA, RecA interacts with LexA causing an autocatalytic cleavage which disrupts the DNA-binding part of LexA, leading to derepression of the SOS regulon and eventually DNA repair.</text>
</comment>
<comment type="catalytic activity">
    <reaction evidence="1">
        <text>Hydrolysis of Ala-|-Gly bond in repressor LexA.</text>
        <dbReference type="EC" id="3.4.21.88"/>
    </reaction>
</comment>
<comment type="subunit">
    <text evidence="1">Homodimer.</text>
</comment>
<comment type="similarity">
    <text evidence="1">Belongs to the peptidase S24 family.</text>
</comment>
<dbReference type="EC" id="3.4.21.88" evidence="1"/>
<dbReference type="EMBL" id="FM209186">
    <property type="protein sequence ID" value="CAW26782.1"/>
    <property type="molecule type" value="Genomic_DNA"/>
</dbReference>
<dbReference type="RefSeq" id="WP_003091196.1">
    <property type="nucleotide sequence ID" value="NC_011770.1"/>
</dbReference>
<dbReference type="SMR" id="B7UYS3"/>
<dbReference type="MEROPS" id="S24.001"/>
<dbReference type="KEGG" id="pag:PLES_20551"/>
<dbReference type="HOGENOM" id="CLU_066192_45_3_6"/>
<dbReference type="GO" id="GO:0003677">
    <property type="term" value="F:DNA binding"/>
    <property type="evidence" value="ECO:0007669"/>
    <property type="project" value="UniProtKB-UniRule"/>
</dbReference>
<dbReference type="GO" id="GO:0004252">
    <property type="term" value="F:serine-type endopeptidase activity"/>
    <property type="evidence" value="ECO:0007669"/>
    <property type="project" value="UniProtKB-UniRule"/>
</dbReference>
<dbReference type="GO" id="GO:0006281">
    <property type="term" value="P:DNA repair"/>
    <property type="evidence" value="ECO:0007669"/>
    <property type="project" value="UniProtKB-UniRule"/>
</dbReference>
<dbReference type="GO" id="GO:0006260">
    <property type="term" value="P:DNA replication"/>
    <property type="evidence" value="ECO:0007669"/>
    <property type="project" value="UniProtKB-UniRule"/>
</dbReference>
<dbReference type="GO" id="GO:0045892">
    <property type="term" value="P:negative regulation of DNA-templated transcription"/>
    <property type="evidence" value="ECO:0007669"/>
    <property type="project" value="UniProtKB-UniRule"/>
</dbReference>
<dbReference type="GO" id="GO:0006508">
    <property type="term" value="P:proteolysis"/>
    <property type="evidence" value="ECO:0007669"/>
    <property type="project" value="InterPro"/>
</dbReference>
<dbReference type="GO" id="GO:0009432">
    <property type="term" value="P:SOS response"/>
    <property type="evidence" value="ECO:0007669"/>
    <property type="project" value="UniProtKB-UniRule"/>
</dbReference>
<dbReference type="CDD" id="cd06529">
    <property type="entry name" value="S24_LexA-like"/>
    <property type="match status" value="1"/>
</dbReference>
<dbReference type="FunFam" id="1.10.10.10:FF:000009">
    <property type="entry name" value="LexA repressor"/>
    <property type="match status" value="1"/>
</dbReference>
<dbReference type="FunFam" id="2.10.109.10:FF:000001">
    <property type="entry name" value="LexA repressor"/>
    <property type="match status" value="1"/>
</dbReference>
<dbReference type="Gene3D" id="2.10.109.10">
    <property type="entry name" value="Umud Fragment, subunit A"/>
    <property type="match status" value="1"/>
</dbReference>
<dbReference type="Gene3D" id="1.10.10.10">
    <property type="entry name" value="Winged helix-like DNA-binding domain superfamily/Winged helix DNA-binding domain"/>
    <property type="match status" value="1"/>
</dbReference>
<dbReference type="HAMAP" id="MF_00015">
    <property type="entry name" value="LexA"/>
    <property type="match status" value="1"/>
</dbReference>
<dbReference type="InterPro" id="IPR006200">
    <property type="entry name" value="LexA"/>
</dbReference>
<dbReference type="InterPro" id="IPR039418">
    <property type="entry name" value="LexA-like"/>
</dbReference>
<dbReference type="InterPro" id="IPR036286">
    <property type="entry name" value="LexA/Signal_pep-like_sf"/>
</dbReference>
<dbReference type="InterPro" id="IPR006199">
    <property type="entry name" value="LexA_DNA-bd_dom"/>
</dbReference>
<dbReference type="InterPro" id="IPR050077">
    <property type="entry name" value="LexA_repressor"/>
</dbReference>
<dbReference type="InterPro" id="IPR006197">
    <property type="entry name" value="Peptidase_S24_LexA"/>
</dbReference>
<dbReference type="InterPro" id="IPR015927">
    <property type="entry name" value="Peptidase_S24_S26A/B/C"/>
</dbReference>
<dbReference type="InterPro" id="IPR036388">
    <property type="entry name" value="WH-like_DNA-bd_sf"/>
</dbReference>
<dbReference type="InterPro" id="IPR036390">
    <property type="entry name" value="WH_DNA-bd_sf"/>
</dbReference>
<dbReference type="NCBIfam" id="TIGR00498">
    <property type="entry name" value="lexA"/>
    <property type="match status" value="1"/>
</dbReference>
<dbReference type="PANTHER" id="PTHR33516">
    <property type="entry name" value="LEXA REPRESSOR"/>
    <property type="match status" value="1"/>
</dbReference>
<dbReference type="PANTHER" id="PTHR33516:SF2">
    <property type="entry name" value="LEXA REPRESSOR-RELATED"/>
    <property type="match status" value="1"/>
</dbReference>
<dbReference type="Pfam" id="PF01726">
    <property type="entry name" value="LexA_DNA_bind"/>
    <property type="match status" value="1"/>
</dbReference>
<dbReference type="Pfam" id="PF00717">
    <property type="entry name" value="Peptidase_S24"/>
    <property type="match status" value="1"/>
</dbReference>
<dbReference type="PRINTS" id="PR00726">
    <property type="entry name" value="LEXASERPTASE"/>
</dbReference>
<dbReference type="SUPFAM" id="SSF51306">
    <property type="entry name" value="LexA/Signal peptidase"/>
    <property type="match status" value="1"/>
</dbReference>
<dbReference type="SUPFAM" id="SSF46785">
    <property type="entry name" value="Winged helix' DNA-binding domain"/>
    <property type="match status" value="1"/>
</dbReference>
<organism>
    <name type="scientific">Pseudomonas aeruginosa (strain LESB58)</name>
    <dbReference type="NCBI Taxonomy" id="557722"/>
    <lineage>
        <taxon>Bacteria</taxon>
        <taxon>Pseudomonadati</taxon>
        <taxon>Pseudomonadota</taxon>
        <taxon>Gammaproteobacteria</taxon>
        <taxon>Pseudomonadales</taxon>
        <taxon>Pseudomonadaceae</taxon>
        <taxon>Pseudomonas</taxon>
    </lineage>
</organism>
<protein>
    <recommendedName>
        <fullName evidence="1">LexA repressor</fullName>
        <ecNumber evidence="1">3.4.21.88</ecNumber>
    </recommendedName>
</protein>
<accession>B7UYS3</accession>
<sequence>MQKLTPRQAEILSFIKRCLEDHGFPPTRAEIAQELGFKSPNAAEEHLKALARKGAIEMTPGASRGIRIPGFEPHAANDDEGLPVIGRVAAGAPILAEQNIEESCRINPAFFNPRADYLLRVRGMSMKDIGILDGDLLAVHVTREARNGQVVVARIGEEVTVKRFKREGSKVWLLAENPEFAPIEVDLKEQELIIEGLSVGVIRR</sequence>
<reference key="1">
    <citation type="journal article" date="2009" name="Genome Res.">
        <title>Newly introduced genomic prophage islands are critical determinants of in vivo competitiveness in the Liverpool epidemic strain of Pseudomonas aeruginosa.</title>
        <authorList>
            <person name="Winstanley C."/>
            <person name="Langille M.G.I."/>
            <person name="Fothergill J.L."/>
            <person name="Kukavica-Ibrulj I."/>
            <person name="Paradis-Bleau C."/>
            <person name="Sanschagrin F."/>
            <person name="Thomson N.R."/>
            <person name="Winsor G.L."/>
            <person name="Quail M.A."/>
            <person name="Lennard N."/>
            <person name="Bignell A."/>
            <person name="Clarke L."/>
            <person name="Seeger K."/>
            <person name="Saunders D."/>
            <person name="Harris D."/>
            <person name="Parkhill J."/>
            <person name="Hancock R.E.W."/>
            <person name="Brinkman F.S.L."/>
            <person name="Levesque R.C."/>
        </authorList>
    </citation>
    <scope>NUCLEOTIDE SEQUENCE [LARGE SCALE GENOMIC DNA]</scope>
    <source>
        <strain>LESB58</strain>
    </source>
</reference>
<keyword id="KW-0068">Autocatalytic cleavage</keyword>
<keyword id="KW-0227">DNA damage</keyword>
<keyword id="KW-0234">DNA repair</keyword>
<keyword id="KW-0235">DNA replication</keyword>
<keyword id="KW-0238">DNA-binding</keyword>
<keyword id="KW-0378">Hydrolase</keyword>
<keyword id="KW-0678">Repressor</keyword>
<keyword id="KW-0742">SOS response</keyword>
<keyword id="KW-0804">Transcription</keyword>
<keyword id="KW-0805">Transcription regulation</keyword>
<feature type="chain" id="PRO_1000192774" description="LexA repressor">
    <location>
        <begin position="1"/>
        <end position="204"/>
    </location>
</feature>
<feature type="DNA-binding region" description="H-T-H motif" evidence="1">
    <location>
        <begin position="28"/>
        <end position="48"/>
    </location>
</feature>
<feature type="active site" description="For autocatalytic cleavage activity" evidence="1">
    <location>
        <position position="125"/>
    </location>
</feature>
<feature type="active site" description="For autocatalytic cleavage activity" evidence="1">
    <location>
        <position position="162"/>
    </location>
</feature>
<feature type="site" description="Cleavage; by autolysis" evidence="1">
    <location>
        <begin position="90"/>
        <end position="91"/>
    </location>
</feature>
<name>LEXA_PSEA8</name>